<evidence type="ECO:0000255" key="1">
    <source>
        <dbReference type="HAMAP-Rule" id="MF_00131"/>
    </source>
</evidence>
<proteinExistence type="inferred from homology"/>
<comment type="function">
    <text evidence="1">The alpha subunit is responsible for the aldol cleavage of indoleglycerol phosphate to indole and glyceraldehyde 3-phosphate.</text>
</comment>
<comment type="catalytic activity">
    <reaction evidence="1">
        <text>(1S,2R)-1-C-(indol-3-yl)glycerol 3-phosphate + L-serine = D-glyceraldehyde 3-phosphate + L-tryptophan + H2O</text>
        <dbReference type="Rhea" id="RHEA:10532"/>
        <dbReference type="ChEBI" id="CHEBI:15377"/>
        <dbReference type="ChEBI" id="CHEBI:33384"/>
        <dbReference type="ChEBI" id="CHEBI:57912"/>
        <dbReference type="ChEBI" id="CHEBI:58866"/>
        <dbReference type="ChEBI" id="CHEBI:59776"/>
        <dbReference type="EC" id="4.2.1.20"/>
    </reaction>
</comment>
<comment type="pathway">
    <text evidence="1">Amino-acid biosynthesis; L-tryptophan biosynthesis; L-tryptophan from chorismate: step 5/5.</text>
</comment>
<comment type="subunit">
    <text evidence="1">Tetramer of two alpha and two beta chains.</text>
</comment>
<comment type="similarity">
    <text evidence="1">Belongs to the TrpA family.</text>
</comment>
<accession>C0QMA1</accession>
<keyword id="KW-0028">Amino-acid biosynthesis</keyword>
<keyword id="KW-0057">Aromatic amino acid biosynthesis</keyword>
<keyword id="KW-0456">Lyase</keyword>
<keyword id="KW-1185">Reference proteome</keyword>
<keyword id="KW-0822">Tryptophan biosynthesis</keyword>
<gene>
    <name evidence="1" type="primary">trpA</name>
    <name type="ordered locus">HRM2_33430</name>
</gene>
<name>TRPA_DESAH</name>
<organism>
    <name type="scientific">Desulforapulum autotrophicum (strain ATCC 43914 / DSM 3382 / VKM B-1955 / HRM2)</name>
    <name type="common">Desulfobacterium autotrophicum</name>
    <dbReference type="NCBI Taxonomy" id="177437"/>
    <lineage>
        <taxon>Bacteria</taxon>
        <taxon>Pseudomonadati</taxon>
        <taxon>Thermodesulfobacteriota</taxon>
        <taxon>Desulfobacteria</taxon>
        <taxon>Desulfobacterales</taxon>
        <taxon>Desulfobacteraceae</taxon>
        <taxon>Desulforapulum</taxon>
    </lineage>
</organism>
<dbReference type="EC" id="4.2.1.20" evidence="1"/>
<dbReference type="EMBL" id="CP001087">
    <property type="protein sequence ID" value="ACN16418.1"/>
    <property type="molecule type" value="Genomic_DNA"/>
</dbReference>
<dbReference type="RefSeq" id="WP_015905180.1">
    <property type="nucleotide sequence ID" value="NC_012108.1"/>
</dbReference>
<dbReference type="SMR" id="C0QMA1"/>
<dbReference type="STRING" id="177437.HRM2_33430"/>
<dbReference type="KEGG" id="dat:HRM2_33430"/>
<dbReference type="eggNOG" id="COG0159">
    <property type="taxonomic scope" value="Bacteria"/>
</dbReference>
<dbReference type="HOGENOM" id="CLU_016734_0_0_7"/>
<dbReference type="OrthoDB" id="9804578at2"/>
<dbReference type="UniPathway" id="UPA00035">
    <property type="reaction ID" value="UER00044"/>
</dbReference>
<dbReference type="Proteomes" id="UP000000442">
    <property type="component" value="Chromosome"/>
</dbReference>
<dbReference type="GO" id="GO:0005829">
    <property type="term" value="C:cytosol"/>
    <property type="evidence" value="ECO:0007669"/>
    <property type="project" value="TreeGrafter"/>
</dbReference>
<dbReference type="GO" id="GO:0004834">
    <property type="term" value="F:tryptophan synthase activity"/>
    <property type="evidence" value="ECO:0007669"/>
    <property type="project" value="UniProtKB-UniRule"/>
</dbReference>
<dbReference type="CDD" id="cd04724">
    <property type="entry name" value="Tryptophan_synthase_alpha"/>
    <property type="match status" value="1"/>
</dbReference>
<dbReference type="Gene3D" id="3.20.20.70">
    <property type="entry name" value="Aldolase class I"/>
    <property type="match status" value="1"/>
</dbReference>
<dbReference type="HAMAP" id="MF_00131">
    <property type="entry name" value="Trp_synth_alpha"/>
    <property type="match status" value="1"/>
</dbReference>
<dbReference type="InterPro" id="IPR013785">
    <property type="entry name" value="Aldolase_TIM"/>
</dbReference>
<dbReference type="InterPro" id="IPR011060">
    <property type="entry name" value="RibuloseP-bd_barrel"/>
</dbReference>
<dbReference type="InterPro" id="IPR018204">
    <property type="entry name" value="Trp_synthase_alpha_AS"/>
</dbReference>
<dbReference type="InterPro" id="IPR002028">
    <property type="entry name" value="Trp_synthase_suA"/>
</dbReference>
<dbReference type="NCBIfam" id="TIGR00262">
    <property type="entry name" value="trpA"/>
    <property type="match status" value="1"/>
</dbReference>
<dbReference type="PANTHER" id="PTHR43406:SF1">
    <property type="entry name" value="TRYPTOPHAN SYNTHASE ALPHA CHAIN, CHLOROPLASTIC"/>
    <property type="match status" value="1"/>
</dbReference>
<dbReference type="PANTHER" id="PTHR43406">
    <property type="entry name" value="TRYPTOPHAN SYNTHASE, ALPHA CHAIN"/>
    <property type="match status" value="1"/>
</dbReference>
<dbReference type="Pfam" id="PF00290">
    <property type="entry name" value="Trp_syntA"/>
    <property type="match status" value="1"/>
</dbReference>
<dbReference type="SUPFAM" id="SSF51366">
    <property type="entry name" value="Ribulose-phoshate binding barrel"/>
    <property type="match status" value="1"/>
</dbReference>
<dbReference type="PROSITE" id="PS00167">
    <property type="entry name" value="TRP_SYNTHASE_ALPHA"/>
    <property type="match status" value="1"/>
</dbReference>
<feature type="chain" id="PRO_1000203177" description="Tryptophan synthase alpha chain">
    <location>
        <begin position="1"/>
        <end position="253"/>
    </location>
</feature>
<feature type="active site" description="Proton acceptor" evidence="1">
    <location>
        <position position="47"/>
    </location>
</feature>
<feature type="active site" description="Proton acceptor" evidence="1">
    <location>
        <position position="58"/>
    </location>
</feature>
<protein>
    <recommendedName>
        <fullName evidence="1">Tryptophan synthase alpha chain</fullName>
        <ecNumber evidence="1">4.2.1.20</ecNumber>
    </recommendedName>
</protein>
<sequence>MLEAYIRERRRQKEILLMTHIVMGYPDFETSMAIVEQMVEAGVDLMELQIPFSEPMADGPVILGANQAALSGGARVERCFEFARQAAAKFDIPFLFMTYYNILFKYGVTPFVNKMADINIKGAIVPDLPPEEGQAYLKAMEEQNLSPIHIFSPRTSNERMDFLASQTRGFVYCVARKGVTGKETRFTEEIAGYLDRCRQATTLPLAVGFGVKDEADIAFLKGKADIAVVGSEMIRVVENQGVEGVGRFIQSLA</sequence>
<reference key="1">
    <citation type="journal article" date="2009" name="Environ. Microbiol.">
        <title>Genome sequence of Desulfobacterium autotrophicum HRM2, a marine sulfate reducer oxidizing organic carbon completely to carbon dioxide.</title>
        <authorList>
            <person name="Strittmatter A.W."/>
            <person name="Liesegang H."/>
            <person name="Rabus R."/>
            <person name="Decker I."/>
            <person name="Amann J."/>
            <person name="Andres S."/>
            <person name="Henne A."/>
            <person name="Fricke W.F."/>
            <person name="Martinez-Arias R."/>
            <person name="Bartels D."/>
            <person name="Goesmann A."/>
            <person name="Krause L."/>
            <person name="Puehler A."/>
            <person name="Klenk H.P."/>
            <person name="Richter M."/>
            <person name="Schuler M."/>
            <person name="Gloeckner F.O."/>
            <person name="Meyerdierks A."/>
            <person name="Gottschalk G."/>
            <person name="Amann R."/>
        </authorList>
    </citation>
    <scope>NUCLEOTIDE SEQUENCE [LARGE SCALE GENOMIC DNA]</scope>
    <source>
        <strain>ATCC 43914 / DSM 3382 / VKM B-1955 / HRM2</strain>
    </source>
</reference>